<feature type="chain" id="PRO_1000148141" description="Ribosomal protein L11 methyltransferase">
    <location>
        <begin position="1"/>
        <end position="316"/>
    </location>
</feature>
<feature type="binding site" evidence="1">
    <location>
        <position position="157"/>
    </location>
    <ligand>
        <name>S-adenosyl-L-methionine</name>
        <dbReference type="ChEBI" id="CHEBI:59789"/>
    </ligand>
</feature>
<feature type="binding site" evidence="1">
    <location>
        <position position="178"/>
    </location>
    <ligand>
        <name>S-adenosyl-L-methionine</name>
        <dbReference type="ChEBI" id="CHEBI:59789"/>
    </ligand>
</feature>
<feature type="binding site" evidence="1">
    <location>
        <position position="200"/>
    </location>
    <ligand>
        <name>S-adenosyl-L-methionine</name>
        <dbReference type="ChEBI" id="CHEBI:59789"/>
    </ligand>
</feature>
<feature type="binding site" evidence="1">
    <location>
        <position position="243"/>
    </location>
    <ligand>
        <name>S-adenosyl-L-methionine</name>
        <dbReference type="ChEBI" id="CHEBI:59789"/>
    </ligand>
</feature>
<sequence length="316" mass="34796">METWQELKVTVKREGEELVSNLLIELGAQGVAIEDSLDYVGNVDRFGEIFPEVEQQEEIVVTAYYPDTVDVTVVEVDLQARISELTDFMDLGEVKMGTTALAEEDWADNWKKYYEPARITHDLTIVPSWTDYEATAGEKIIKLDPGMAFGTGTHPTTKMSLFALEQVLRGGETVLDVGTGSGVLSIASSLLGAKEIFAYDLDDVAVRVAQENIELNPGMENIHVAAGDLLKGVEIEADVIVANILADILIHLTEDAYRLVKDEGYLIMSGIIKDKWDMVRQSAESAGFFLETHMIQGEWNACVFKKTKDISGVIGG</sequence>
<reference key="1">
    <citation type="journal article" date="2010" name="Genome Biol.">
        <title>Structure and dynamics of the pan-genome of Streptococcus pneumoniae and closely related species.</title>
        <authorList>
            <person name="Donati C."/>
            <person name="Hiller N.L."/>
            <person name="Tettelin H."/>
            <person name="Muzzi A."/>
            <person name="Croucher N.J."/>
            <person name="Angiuoli S.V."/>
            <person name="Oggioni M."/>
            <person name="Dunning Hotopp J.C."/>
            <person name="Hu F.Z."/>
            <person name="Riley D.R."/>
            <person name="Covacci A."/>
            <person name="Mitchell T.J."/>
            <person name="Bentley S.D."/>
            <person name="Kilian M."/>
            <person name="Ehrlich G.D."/>
            <person name="Rappuoli R."/>
            <person name="Moxon E.R."/>
            <person name="Masignani V."/>
        </authorList>
    </citation>
    <scope>NUCLEOTIDE SEQUENCE [LARGE SCALE GENOMIC DNA]</scope>
    <source>
        <strain>70585</strain>
    </source>
</reference>
<protein>
    <recommendedName>
        <fullName evidence="1">Ribosomal protein L11 methyltransferase</fullName>
        <shortName evidence="1">L11 Mtase</shortName>
        <ecNumber evidence="1">2.1.1.-</ecNumber>
    </recommendedName>
</protein>
<gene>
    <name evidence="1" type="primary">prmA</name>
    <name type="ordered locus">SP70585_1828</name>
</gene>
<comment type="function">
    <text evidence="1">Methylates ribosomal protein L11.</text>
</comment>
<comment type="catalytic activity">
    <reaction evidence="1">
        <text>L-lysyl-[protein] + 3 S-adenosyl-L-methionine = N(6),N(6),N(6)-trimethyl-L-lysyl-[protein] + 3 S-adenosyl-L-homocysteine + 3 H(+)</text>
        <dbReference type="Rhea" id="RHEA:54192"/>
        <dbReference type="Rhea" id="RHEA-COMP:9752"/>
        <dbReference type="Rhea" id="RHEA-COMP:13826"/>
        <dbReference type="ChEBI" id="CHEBI:15378"/>
        <dbReference type="ChEBI" id="CHEBI:29969"/>
        <dbReference type="ChEBI" id="CHEBI:57856"/>
        <dbReference type="ChEBI" id="CHEBI:59789"/>
        <dbReference type="ChEBI" id="CHEBI:61961"/>
    </reaction>
</comment>
<comment type="subcellular location">
    <subcellularLocation>
        <location evidence="1">Cytoplasm</location>
    </subcellularLocation>
</comment>
<comment type="similarity">
    <text evidence="1">Belongs to the methyltransferase superfamily. PrmA family.</text>
</comment>
<dbReference type="EC" id="2.1.1.-" evidence="1"/>
<dbReference type="EMBL" id="CP000918">
    <property type="protein sequence ID" value="ACO16318.1"/>
    <property type="molecule type" value="Genomic_DNA"/>
</dbReference>
<dbReference type="RefSeq" id="WP_000451126.1">
    <property type="nucleotide sequence ID" value="NC_012468.1"/>
</dbReference>
<dbReference type="SMR" id="C1C922"/>
<dbReference type="KEGG" id="snm:SP70585_1828"/>
<dbReference type="HOGENOM" id="CLU_049382_0_1_9"/>
<dbReference type="Proteomes" id="UP000002211">
    <property type="component" value="Chromosome"/>
</dbReference>
<dbReference type="GO" id="GO:0005737">
    <property type="term" value="C:cytoplasm"/>
    <property type="evidence" value="ECO:0007669"/>
    <property type="project" value="UniProtKB-SubCell"/>
</dbReference>
<dbReference type="GO" id="GO:0016279">
    <property type="term" value="F:protein-lysine N-methyltransferase activity"/>
    <property type="evidence" value="ECO:0007669"/>
    <property type="project" value="RHEA"/>
</dbReference>
<dbReference type="GO" id="GO:0032259">
    <property type="term" value="P:methylation"/>
    <property type="evidence" value="ECO:0007669"/>
    <property type="project" value="UniProtKB-KW"/>
</dbReference>
<dbReference type="CDD" id="cd02440">
    <property type="entry name" value="AdoMet_MTases"/>
    <property type="match status" value="1"/>
</dbReference>
<dbReference type="Gene3D" id="3.40.50.150">
    <property type="entry name" value="Vaccinia Virus protein VP39"/>
    <property type="match status" value="1"/>
</dbReference>
<dbReference type="HAMAP" id="MF_00735">
    <property type="entry name" value="Methyltr_PrmA"/>
    <property type="match status" value="1"/>
</dbReference>
<dbReference type="InterPro" id="IPR050078">
    <property type="entry name" value="Ribosomal_L11_MeTrfase_PrmA"/>
</dbReference>
<dbReference type="InterPro" id="IPR004498">
    <property type="entry name" value="Ribosomal_PrmA_MeTrfase"/>
</dbReference>
<dbReference type="InterPro" id="IPR029063">
    <property type="entry name" value="SAM-dependent_MTases_sf"/>
</dbReference>
<dbReference type="NCBIfam" id="TIGR00406">
    <property type="entry name" value="prmA"/>
    <property type="match status" value="1"/>
</dbReference>
<dbReference type="PANTHER" id="PTHR43648">
    <property type="entry name" value="ELECTRON TRANSFER FLAVOPROTEIN BETA SUBUNIT LYSINE METHYLTRANSFERASE"/>
    <property type="match status" value="1"/>
</dbReference>
<dbReference type="PANTHER" id="PTHR43648:SF1">
    <property type="entry name" value="ELECTRON TRANSFER FLAVOPROTEIN BETA SUBUNIT LYSINE METHYLTRANSFERASE"/>
    <property type="match status" value="1"/>
</dbReference>
<dbReference type="Pfam" id="PF06325">
    <property type="entry name" value="PrmA"/>
    <property type="match status" value="1"/>
</dbReference>
<dbReference type="PIRSF" id="PIRSF000401">
    <property type="entry name" value="RPL11_MTase"/>
    <property type="match status" value="1"/>
</dbReference>
<dbReference type="SUPFAM" id="SSF53335">
    <property type="entry name" value="S-adenosyl-L-methionine-dependent methyltransferases"/>
    <property type="match status" value="1"/>
</dbReference>
<evidence type="ECO:0000255" key="1">
    <source>
        <dbReference type="HAMAP-Rule" id="MF_00735"/>
    </source>
</evidence>
<keyword id="KW-0963">Cytoplasm</keyword>
<keyword id="KW-0489">Methyltransferase</keyword>
<keyword id="KW-0949">S-adenosyl-L-methionine</keyword>
<keyword id="KW-0808">Transferase</keyword>
<name>PRMA_STRP7</name>
<organism>
    <name type="scientific">Streptococcus pneumoniae (strain 70585)</name>
    <dbReference type="NCBI Taxonomy" id="488221"/>
    <lineage>
        <taxon>Bacteria</taxon>
        <taxon>Bacillati</taxon>
        <taxon>Bacillota</taxon>
        <taxon>Bacilli</taxon>
        <taxon>Lactobacillales</taxon>
        <taxon>Streptococcaceae</taxon>
        <taxon>Streptococcus</taxon>
    </lineage>
</organism>
<accession>C1C922</accession>
<proteinExistence type="inferred from homology"/>